<keyword id="KW-0472">Membrane</keyword>
<keyword id="KW-1185">Reference proteome</keyword>
<reference key="1">
    <citation type="journal article" date="2022" name="J. Infect. Dis.">
        <title>Exportation of Monkeypox virus from the African continent.</title>
        <authorList>
            <person name="Mauldin M.R."/>
            <person name="McCollum A.M."/>
            <person name="Nakazawa Y.J."/>
            <person name="Mandra A."/>
            <person name="Whitehouse E.R."/>
            <person name="Davidson W."/>
            <person name="Zhao H."/>
            <person name="Gao J."/>
            <person name="Li Y."/>
            <person name="Doty J."/>
            <person name="Yinka-Ogunleye A."/>
            <person name="Akinpelu A."/>
            <person name="Aruna O."/>
            <person name="Naidoo D."/>
            <person name="Lewandowski K."/>
            <person name="Afrough B."/>
            <person name="Graham V."/>
            <person name="Aarons E."/>
            <person name="Hewson R."/>
            <person name="Vipond R."/>
            <person name="Dunning J."/>
            <person name="Chand M."/>
            <person name="Brown C."/>
            <person name="Cohen-Gihon I."/>
            <person name="Erez N."/>
            <person name="Shifman O."/>
            <person name="Israeli O."/>
            <person name="Sharon M."/>
            <person name="Schwartz E."/>
            <person name="Beth-Din A."/>
            <person name="Zvi A."/>
            <person name="Mak T.M."/>
            <person name="Ng Y.K."/>
            <person name="Cui L."/>
            <person name="Lin R.T.P."/>
            <person name="Olson V.A."/>
            <person name="Brooks T."/>
            <person name="Paran N."/>
            <person name="Ihekweazu C."/>
            <person name="Reynolds M.G."/>
        </authorList>
    </citation>
    <scope>NUCLEOTIDE SEQUENCE [LARGE SCALE GENOMIC DNA]</scope>
    <source>
        <strain>MPXV-M5312_HM12_Rivers</strain>
    </source>
</reference>
<organism>
    <name type="scientific">Monkeypox virus</name>
    <dbReference type="NCBI Taxonomy" id="10244"/>
    <lineage>
        <taxon>Viruses</taxon>
        <taxon>Varidnaviria</taxon>
        <taxon>Bamfordvirae</taxon>
        <taxon>Nucleocytoviricota</taxon>
        <taxon>Pokkesviricetes</taxon>
        <taxon>Chitovirales</taxon>
        <taxon>Poxviridae</taxon>
        <taxon>Chordopoxvirinae</taxon>
        <taxon>Orthopoxvirus</taxon>
    </lineage>
</organism>
<gene>
    <name type="primary">OPG125</name>
    <name type="ORF">MPXVgp111</name>
</gene>
<protein>
    <recommendedName>
        <fullName>Scaffold protein OPG125</fullName>
    </recommendedName>
    <alternativeName>
        <fullName>62 kDa protein</fullName>
    </alternativeName>
    <alternativeName>
        <fullName>Rifampicin resistance protein</fullName>
    </alternativeName>
</protein>
<sequence length="551" mass="61937">MNNTIINSLIGGDDFIKRSNVFAVDSQIPTLYMPQYISLSGVMTNDGPDNQAIASFEIRDQYITALNHLVLSLELPEVKGMGRFGYVPYVGYKCINHVSVSSCNGVIWEIEGEELYNNCINNTIALKHSGYSSELNDISIGLTPNDTIKEPSTVYVYIKTPFDVEDTFSSLKLSDSKITVTVTFNPVSDIVIRDSSFDFETFNKEFVYVPELSFIGYMVKNVQIKPSFIEKPRRVIGQINQPTATVTEVHAATSLSVYTKPYYGNTDNKFISYPGYSQDEKDYIDAYVSRLLDDLVIVSDGPPTGYPESAEIVEVPEDGVVSIQDADVYVKIDNVPDNMSVYLHTNLLMFGTRKNSFIYNISKKFSAITGTYSDATKRTVFAHISHTINIIDTSIPVSLWTSQRNVYNGDNRSAESKAKDLFINDPFIKGIDFKNKTDIISRLEVRFGNDVLYSENGPISRIYNELLTKSNNGTRTLTFNFTPKIFFRPTTITANVSRGKDKLSVRVVYSTMDINHPIYYVQKQLVVVCNDLYKVSYDQGVSITKIMGDNN</sequence>
<accession>A0A7H0DN97</accession>
<name>PG125_MONPV</name>
<dbReference type="EMBL" id="MT903340">
    <property type="protein sequence ID" value="QNP12980.1"/>
    <property type="molecule type" value="Genomic_DNA"/>
</dbReference>
<dbReference type="RefSeq" id="YP_010377107.1">
    <property type="nucleotide sequence ID" value="NC_063383.1"/>
</dbReference>
<dbReference type="SMR" id="A0A7H0DN97"/>
<dbReference type="GeneID" id="72551520"/>
<dbReference type="Proteomes" id="UP000516359">
    <property type="component" value="Genome"/>
</dbReference>
<dbReference type="GO" id="GO:0016020">
    <property type="term" value="C:membrane"/>
    <property type="evidence" value="ECO:0007669"/>
    <property type="project" value="UniProtKB-SubCell"/>
</dbReference>
<dbReference type="GO" id="GO:0046677">
    <property type="term" value="P:response to antibiotic"/>
    <property type="evidence" value="ECO:0007669"/>
    <property type="project" value="InterPro"/>
</dbReference>
<dbReference type="Gene3D" id="2.70.9.10">
    <property type="entry name" value="Adenovirus Type 2 Hexon, domain 4"/>
    <property type="match status" value="1"/>
</dbReference>
<dbReference type="InterPro" id="IPR005008">
    <property type="entry name" value="Poxvirus_Rif-R"/>
</dbReference>
<dbReference type="Pfam" id="PF03340">
    <property type="entry name" value="Pox_Rif"/>
    <property type="match status" value="1"/>
</dbReference>
<proteinExistence type="evidence at transcript level"/>
<organismHost>
    <name type="scientific">Cynomys gunnisoni</name>
    <name type="common">Gunnison's prairie dog</name>
    <name type="synonym">Spermophilus gunnisoni</name>
    <dbReference type="NCBI Taxonomy" id="45479"/>
</organismHost>
<organismHost>
    <name type="scientific">Cynomys leucurus</name>
    <name type="common">White-tailed prairie dog</name>
    <dbReference type="NCBI Taxonomy" id="99825"/>
</organismHost>
<organismHost>
    <name type="scientific">Cynomys ludovicianus</name>
    <name type="common">Black-tailed prairie dog</name>
    <dbReference type="NCBI Taxonomy" id="45480"/>
</organismHost>
<organismHost>
    <name type="scientific">Cynomys mexicanus</name>
    <name type="common">Mexican prairie dog</name>
    <dbReference type="NCBI Taxonomy" id="99826"/>
</organismHost>
<organismHost>
    <name type="scientific">Cynomys parvidens</name>
    <name type="common">Utah prairie dog</name>
    <dbReference type="NCBI Taxonomy" id="99827"/>
</organismHost>
<organismHost>
    <name type="scientific">Gliridae</name>
    <name type="common">dormice</name>
    <dbReference type="NCBI Taxonomy" id="30650"/>
</organismHost>
<organismHost>
    <name type="scientific">Heliosciurus ruwenzorii</name>
    <name type="common">Ruwenzori sun squirrel</name>
    <dbReference type="NCBI Taxonomy" id="226685"/>
</organismHost>
<organismHost>
    <name type="scientific">Homo sapiens</name>
    <name type="common">Human</name>
    <dbReference type="NCBI Taxonomy" id="9606"/>
</organismHost>
<organismHost>
    <name type="scientific">Mus musculus</name>
    <name type="common">Mouse</name>
    <dbReference type="NCBI Taxonomy" id="10090"/>
</organismHost>
<feature type="chain" id="PRO_0000457494" description="Scaffold protein OPG125">
    <location>
        <begin position="1"/>
        <end position="551"/>
    </location>
</feature>
<comment type="function">
    <text evidence="1">Acts with RNA polymerase to initiate transcription from late gene promoters.</text>
</comment>
<comment type="subunit">
    <text evidence="1">Interacts with the late transcription elongation factor VLTF-4/OPG110. Interacts with the late transcription factors VLTF-1.</text>
</comment>
<comment type="subcellular location">
    <subcellularLocation>
        <location evidence="2">Membrane</location>
        <topology evidence="2">Peripheral membrane protein</topology>
    </subcellularLocation>
    <text evidence="2">Associates transitorily with crescent and IV membranes.</text>
</comment>
<comment type="induction">
    <text>Expressed in the early phase of the viral replicative cycle.</text>
</comment>
<comment type="similarity">
    <text evidence="3">Belongs to the orthopoxvirus protein OPG125 family.</text>
</comment>
<evidence type="ECO:0000250" key="1">
    <source>
        <dbReference type="UniProtKB" id="P68319"/>
    </source>
</evidence>
<evidence type="ECO:0000250" key="2">
    <source>
        <dbReference type="UniProtKB" id="P68440"/>
    </source>
</evidence>
<evidence type="ECO:0000305" key="3"/>